<organism>
    <name type="scientific">Mesomycoplasma hyopneumoniae (strain J / ATCC 25934 / NCTC 10110)</name>
    <name type="common">Mycoplasma hyopneumoniae</name>
    <dbReference type="NCBI Taxonomy" id="262719"/>
    <lineage>
        <taxon>Bacteria</taxon>
        <taxon>Bacillati</taxon>
        <taxon>Mycoplasmatota</taxon>
        <taxon>Mycoplasmoidales</taxon>
        <taxon>Metamycoplasmataceae</taxon>
        <taxon>Mesomycoplasma</taxon>
    </lineage>
</organism>
<name>G6PI_MESHJ</name>
<accession>Q4A9F3</accession>
<dbReference type="EC" id="5.3.1.9" evidence="1"/>
<dbReference type="EMBL" id="AE017243">
    <property type="protein sequence ID" value="AAZ44618.1"/>
    <property type="molecule type" value="Genomic_DNA"/>
</dbReference>
<dbReference type="RefSeq" id="WP_011284275.1">
    <property type="nucleotide sequence ID" value="NC_007295.1"/>
</dbReference>
<dbReference type="SMR" id="Q4A9F3"/>
<dbReference type="GeneID" id="41334831"/>
<dbReference type="KEGG" id="mhj:MHJ_0532"/>
<dbReference type="eggNOG" id="COG0166">
    <property type="taxonomic scope" value="Bacteria"/>
</dbReference>
<dbReference type="HOGENOM" id="CLU_037303_0_1_14"/>
<dbReference type="OrthoDB" id="140919at2"/>
<dbReference type="UniPathway" id="UPA00109">
    <property type="reaction ID" value="UER00181"/>
</dbReference>
<dbReference type="UniPathway" id="UPA00138"/>
<dbReference type="Proteomes" id="UP000000548">
    <property type="component" value="Chromosome"/>
</dbReference>
<dbReference type="GO" id="GO:0005829">
    <property type="term" value="C:cytosol"/>
    <property type="evidence" value="ECO:0007669"/>
    <property type="project" value="TreeGrafter"/>
</dbReference>
<dbReference type="GO" id="GO:0097367">
    <property type="term" value="F:carbohydrate derivative binding"/>
    <property type="evidence" value="ECO:0007669"/>
    <property type="project" value="InterPro"/>
</dbReference>
<dbReference type="GO" id="GO:0004347">
    <property type="term" value="F:glucose-6-phosphate isomerase activity"/>
    <property type="evidence" value="ECO:0007669"/>
    <property type="project" value="UniProtKB-UniRule"/>
</dbReference>
<dbReference type="GO" id="GO:0048029">
    <property type="term" value="F:monosaccharide binding"/>
    <property type="evidence" value="ECO:0007669"/>
    <property type="project" value="TreeGrafter"/>
</dbReference>
<dbReference type="GO" id="GO:0006094">
    <property type="term" value="P:gluconeogenesis"/>
    <property type="evidence" value="ECO:0007669"/>
    <property type="project" value="UniProtKB-UniRule"/>
</dbReference>
<dbReference type="GO" id="GO:0051156">
    <property type="term" value="P:glucose 6-phosphate metabolic process"/>
    <property type="evidence" value="ECO:0007669"/>
    <property type="project" value="TreeGrafter"/>
</dbReference>
<dbReference type="GO" id="GO:0006096">
    <property type="term" value="P:glycolytic process"/>
    <property type="evidence" value="ECO:0007669"/>
    <property type="project" value="UniProtKB-UniRule"/>
</dbReference>
<dbReference type="CDD" id="cd05015">
    <property type="entry name" value="SIS_PGI_1"/>
    <property type="match status" value="1"/>
</dbReference>
<dbReference type="CDD" id="cd05016">
    <property type="entry name" value="SIS_PGI_2"/>
    <property type="match status" value="1"/>
</dbReference>
<dbReference type="FunFam" id="3.40.50.10490:FF:000016">
    <property type="entry name" value="Glucose-6-phosphate isomerase"/>
    <property type="match status" value="1"/>
</dbReference>
<dbReference type="Gene3D" id="3.40.50.10490">
    <property type="entry name" value="Glucose-6-phosphate isomerase like protein, domain 1"/>
    <property type="match status" value="2"/>
</dbReference>
<dbReference type="HAMAP" id="MF_00473">
    <property type="entry name" value="G6P_isomerase"/>
    <property type="match status" value="1"/>
</dbReference>
<dbReference type="InterPro" id="IPR001672">
    <property type="entry name" value="G6P_Isomerase"/>
</dbReference>
<dbReference type="InterPro" id="IPR018189">
    <property type="entry name" value="Phosphoglucose_isomerase_CS"/>
</dbReference>
<dbReference type="InterPro" id="IPR046348">
    <property type="entry name" value="SIS_dom_sf"/>
</dbReference>
<dbReference type="InterPro" id="IPR035476">
    <property type="entry name" value="SIS_PGI_1"/>
</dbReference>
<dbReference type="InterPro" id="IPR035482">
    <property type="entry name" value="SIS_PGI_2"/>
</dbReference>
<dbReference type="NCBIfam" id="NF010697">
    <property type="entry name" value="PRK14097.1"/>
    <property type="match status" value="1"/>
</dbReference>
<dbReference type="PANTHER" id="PTHR11469">
    <property type="entry name" value="GLUCOSE-6-PHOSPHATE ISOMERASE"/>
    <property type="match status" value="1"/>
</dbReference>
<dbReference type="PANTHER" id="PTHR11469:SF1">
    <property type="entry name" value="GLUCOSE-6-PHOSPHATE ISOMERASE"/>
    <property type="match status" value="1"/>
</dbReference>
<dbReference type="Pfam" id="PF00342">
    <property type="entry name" value="PGI"/>
    <property type="match status" value="1"/>
</dbReference>
<dbReference type="PRINTS" id="PR00662">
    <property type="entry name" value="G6PISOMERASE"/>
</dbReference>
<dbReference type="SUPFAM" id="SSF53697">
    <property type="entry name" value="SIS domain"/>
    <property type="match status" value="1"/>
</dbReference>
<dbReference type="PROSITE" id="PS00765">
    <property type="entry name" value="P_GLUCOSE_ISOMERASE_1"/>
    <property type="match status" value="1"/>
</dbReference>
<dbReference type="PROSITE" id="PS00174">
    <property type="entry name" value="P_GLUCOSE_ISOMERASE_2"/>
    <property type="match status" value="1"/>
</dbReference>
<dbReference type="PROSITE" id="PS51463">
    <property type="entry name" value="P_GLUCOSE_ISOMERASE_3"/>
    <property type="match status" value="1"/>
</dbReference>
<sequence>MSLKLEVKTEIKLDYQGFQNQINEFHNRINDKNSPDINFLGWNNFPEVAINPQEIARMRKIVENLHQNSINVLVVIGIGGSYLGAKAALDFILGLGPFENKPEVIFLGNSLSSTDLYQKIEYLKTKNFAINVISKSGSTIEPAITFQILYQFLIDQIGEKLAKTRTFVTTSIKSGELLEIAKSNELEIFEVIESIGGRFSVLSSVGFFPLLFAKINVDEIIQGAIEAHKRYSTSSISQNLAYKYALFRFLMYKNFNYKTEILISYEPFLIYFNEWWKQLFGESEGKNLKGLFPASAIFTTDLHSLGQFIQDGSKNFFQTIIYIKKPKFDLGIKKIVQFNTKINKLSGKTVSEINFQAFLATTLAHSSYGNNPNLVLEIADSSPKTFGHLVMFFEKACAMSAYLLGVNPFDQPGVESYKNELAKNLGWDR</sequence>
<evidence type="ECO:0000255" key="1">
    <source>
        <dbReference type="HAMAP-Rule" id="MF_00473"/>
    </source>
</evidence>
<keyword id="KW-0963">Cytoplasm</keyword>
<keyword id="KW-0312">Gluconeogenesis</keyword>
<keyword id="KW-0324">Glycolysis</keyword>
<keyword id="KW-0413">Isomerase</keyword>
<proteinExistence type="inferred from homology"/>
<reference key="1">
    <citation type="journal article" date="2005" name="J. Bacteriol.">
        <title>Swine and poultry pathogens: the complete genome sequences of two strains of Mycoplasma hyopneumoniae and a strain of Mycoplasma synoviae.</title>
        <authorList>
            <person name="Vasconcelos A.T.R."/>
            <person name="Ferreira H.B."/>
            <person name="Bizarro C.V."/>
            <person name="Bonatto S.L."/>
            <person name="Carvalho M.O."/>
            <person name="Pinto P.M."/>
            <person name="Almeida D.F."/>
            <person name="Almeida L.G.P."/>
            <person name="Almeida R."/>
            <person name="Alves-Junior L."/>
            <person name="Assuncao E.N."/>
            <person name="Azevedo V.A.C."/>
            <person name="Bogo M.R."/>
            <person name="Brigido M.M."/>
            <person name="Brocchi M."/>
            <person name="Burity H.A."/>
            <person name="Camargo A.A."/>
            <person name="Camargo S.S."/>
            <person name="Carepo M.S."/>
            <person name="Carraro D.M."/>
            <person name="de Mattos Cascardo J.C."/>
            <person name="Castro L.A."/>
            <person name="Cavalcanti G."/>
            <person name="Chemale G."/>
            <person name="Collevatti R.G."/>
            <person name="Cunha C.W."/>
            <person name="Dallagiovanna B."/>
            <person name="Dambros B.P."/>
            <person name="Dellagostin O.A."/>
            <person name="Falcao C."/>
            <person name="Fantinatti-Garboggini F."/>
            <person name="Felipe M.S.S."/>
            <person name="Fiorentin L."/>
            <person name="Franco G.R."/>
            <person name="Freitas N.S.A."/>
            <person name="Frias D."/>
            <person name="Grangeiro T.B."/>
            <person name="Grisard E.C."/>
            <person name="Guimaraes C.T."/>
            <person name="Hungria M."/>
            <person name="Jardim S.N."/>
            <person name="Krieger M.A."/>
            <person name="Laurino J.P."/>
            <person name="Lima L.F.A."/>
            <person name="Lopes M.I."/>
            <person name="Loreto E.L.S."/>
            <person name="Madeira H.M.F."/>
            <person name="Manfio G.P."/>
            <person name="Maranhao A.Q."/>
            <person name="Martinkovics C.T."/>
            <person name="Medeiros S.R.B."/>
            <person name="Moreira M.A.M."/>
            <person name="Neiva M."/>
            <person name="Ramalho-Neto C.E."/>
            <person name="Nicolas M.F."/>
            <person name="Oliveira S.C."/>
            <person name="Paixao R.F.C."/>
            <person name="Pedrosa F.O."/>
            <person name="Pena S.D.J."/>
            <person name="Pereira M."/>
            <person name="Pereira-Ferrari L."/>
            <person name="Piffer I."/>
            <person name="Pinto L.S."/>
            <person name="Potrich D.P."/>
            <person name="Salim A.C.M."/>
            <person name="Santos F.R."/>
            <person name="Schmitt R."/>
            <person name="Schneider M.P.C."/>
            <person name="Schrank A."/>
            <person name="Schrank I.S."/>
            <person name="Schuck A.F."/>
            <person name="Seuanez H.N."/>
            <person name="Silva D.W."/>
            <person name="Silva R."/>
            <person name="Silva S.C."/>
            <person name="Soares C.M.A."/>
            <person name="Souza K.R.L."/>
            <person name="Souza R.C."/>
            <person name="Staats C.C."/>
            <person name="Steffens M.B.R."/>
            <person name="Teixeira S.M.R."/>
            <person name="Urmenyi T.P."/>
            <person name="Vainstein M.H."/>
            <person name="Zuccherato L.W."/>
            <person name="Simpson A.J.G."/>
            <person name="Zaha A."/>
        </authorList>
    </citation>
    <scope>NUCLEOTIDE SEQUENCE [LARGE SCALE GENOMIC DNA]</scope>
    <source>
        <strain>J / ATCC 25934 / NCTC 10110</strain>
    </source>
</reference>
<comment type="function">
    <text evidence="1">Catalyzes the reversible isomerization of glucose-6-phosphate to fructose-6-phosphate.</text>
</comment>
<comment type="catalytic activity">
    <reaction evidence="1">
        <text>alpha-D-glucose 6-phosphate = beta-D-fructose 6-phosphate</text>
        <dbReference type="Rhea" id="RHEA:11816"/>
        <dbReference type="ChEBI" id="CHEBI:57634"/>
        <dbReference type="ChEBI" id="CHEBI:58225"/>
        <dbReference type="EC" id="5.3.1.9"/>
    </reaction>
</comment>
<comment type="pathway">
    <text evidence="1">Carbohydrate biosynthesis; gluconeogenesis.</text>
</comment>
<comment type="pathway">
    <text evidence="1">Carbohydrate degradation; glycolysis; D-glyceraldehyde 3-phosphate and glycerone phosphate from D-glucose: step 2/4.</text>
</comment>
<comment type="subcellular location">
    <subcellularLocation>
        <location evidence="1">Cytoplasm</location>
    </subcellularLocation>
</comment>
<comment type="similarity">
    <text evidence="1">Belongs to the GPI family.</text>
</comment>
<feature type="chain" id="PRO_0000180682" description="Glucose-6-phosphate isomerase">
    <location>
        <begin position="1"/>
        <end position="429"/>
    </location>
</feature>
<feature type="active site" description="Proton donor" evidence="1">
    <location>
        <position position="282"/>
    </location>
</feature>
<feature type="active site" evidence="1">
    <location>
        <position position="303"/>
    </location>
</feature>
<feature type="active site" evidence="1">
    <location>
        <position position="418"/>
    </location>
</feature>
<gene>
    <name evidence="1" type="primary">pgi</name>
    <name type="ordered locus">MHJ_0532</name>
</gene>
<protein>
    <recommendedName>
        <fullName evidence="1">Glucose-6-phosphate isomerase</fullName>
        <shortName evidence="1">GPI</shortName>
        <ecNumber evidence="1">5.3.1.9</ecNumber>
    </recommendedName>
    <alternativeName>
        <fullName evidence="1">Phosphoglucose isomerase</fullName>
        <shortName evidence="1">PGI</shortName>
    </alternativeName>
    <alternativeName>
        <fullName evidence="1">Phosphohexose isomerase</fullName>
        <shortName evidence="1">PHI</shortName>
    </alternativeName>
</protein>